<gene>
    <name type="ordered locus">Rmet_3697</name>
</gene>
<comment type="similarity">
    <text evidence="1">Belongs to the UPF0502 family.</text>
</comment>
<geneLocation type="plasmid">
    <name>megaplasmid CH34</name>
</geneLocation>
<accession>Q1LH07</accession>
<organism>
    <name type="scientific">Cupriavidus metallidurans (strain ATCC 43123 / DSM 2839 / NBRC 102507 / CH34)</name>
    <name type="common">Ralstonia metallidurans</name>
    <dbReference type="NCBI Taxonomy" id="266264"/>
    <lineage>
        <taxon>Bacteria</taxon>
        <taxon>Pseudomonadati</taxon>
        <taxon>Pseudomonadota</taxon>
        <taxon>Betaproteobacteria</taxon>
        <taxon>Burkholderiales</taxon>
        <taxon>Burkholderiaceae</taxon>
        <taxon>Cupriavidus</taxon>
    </lineage>
</organism>
<evidence type="ECO:0000255" key="1">
    <source>
        <dbReference type="HAMAP-Rule" id="MF_01584"/>
    </source>
</evidence>
<evidence type="ECO:0000256" key="2">
    <source>
        <dbReference type="SAM" id="MobiDB-lite"/>
    </source>
</evidence>
<proteinExistence type="inferred from homology"/>
<reference key="1">
    <citation type="journal article" date="2010" name="PLoS ONE">
        <title>The complete genome sequence of Cupriavidus metallidurans strain CH34, a master survivalist in harsh and anthropogenic environments.</title>
        <authorList>
            <person name="Janssen P.J."/>
            <person name="Van Houdt R."/>
            <person name="Moors H."/>
            <person name="Monsieurs P."/>
            <person name="Morin N."/>
            <person name="Michaux A."/>
            <person name="Benotmane M.A."/>
            <person name="Leys N."/>
            <person name="Vallaeys T."/>
            <person name="Lapidus A."/>
            <person name="Monchy S."/>
            <person name="Medigue C."/>
            <person name="Taghavi S."/>
            <person name="McCorkle S."/>
            <person name="Dunn J."/>
            <person name="van der Lelie D."/>
            <person name="Mergeay M."/>
        </authorList>
    </citation>
    <scope>NUCLEOTIDE SEQUENCE [LARGE SCALE GENOMIC DNA]</scope>
    <source>
        <strain>ATCC 43123 / DSM 2839 / NBRC 102507 / CH34</strain>
    </source>
</reference>
<name>Y3697_CUPMC</name>
<feature type="chain" id="PRO_0000309414" description="UPF0502 protein Rmet_3697">
    <location>
        <begin position="1"/>
        <end position="243"/>
    </location>
</feature>
<feature type="region of interest" description="Disordered" evidence="2">
    <location>
        <begin position="1"/>
        <end position="23"/>
    </location>
</feature>
<feature type="compositionally biased region" description="Low complexity" evidence="2">
    <location>
        <begin position="1"/>
        <end position="11"/>
    </location>
</feature>
<dbReference type="EMBL" id="CP000353">
    <property type="protein sequence ID" value="ABF10569.1"/>
    <property type="molecule type" value="Genomic_DNA"/>
</dbReference>
<dbReference type="RefSeq" id="WP_011518218.1">
    <property type="nucleotide sequence ID" value="NC_007974.2"/>
</dbReference>
<dbReference type="SMR" id="Q1LH07"/>
<dbReference type="KEGG" id="rme:Rmet_3697"/>
<dbReference type="eggNOG" id="COG3132">
    <property type="taxonomic scope" value="Bacteria"/>
</dbReference>
<dbReference type="HOGENOM" id="CLU_057831_0_0_4"/>
<dbReference type="Proteomes" id="UP000002429">
    <property type="component" value="Plasmid megaplasmid CH34"/>
</dbReference>
<dbReference type="Gene3D" id="1.10.10.10">
    <property type="entry name" value="Winged helix-like DNA-binding domain superfamily/Winged helix DNA-binding domain"/>
    <property type="match status" value="2"/>
</dbReference>
<dbReference type="HAMAP" id="MF_01584">
    <property type="entry name" value="UPF0502"/>
    <property type="match status" value="1"/>
</dbReference>
<dbReference type="InterPro" id="IPR007432">
    <property type="entry name" value="DUF480"/>
</dbReference>
<dbReference type="InterPro" id="IPR036388">
    <property type="entry name" value="WH-like_DNA-bd_sf"/>
</dbReference>
<dbReference type="InterPro" id="IPR036390">
    <property type="entry name" value="WH_DNA-bd_sf"/>
</dbReference>
<dbReference type="PANTHER" id="PTHR38768">
    <property type="entry name" value="UPF0502 PROTEIN YCEH"/>
    <property type="match status" value="1"/>
</dbReference>
<dbReference type="PANTHER" id="PTHR38768:SF1">
    <property type="entry name" value="UPF0502 PROTEIN YCEH"/>
    <property type="match status" value="1"/>
</dbReference>
<dbReference type="Pfam" id="PF04337">
    <property type="entry name" value="DUF480"/>
    <property type="match status" value="1"/>
</dbReference>
<dbReference type="SUPFAM" id="SSF46785">
    <property type="entry name" value="Winged helix' DNA-binding domain"/>
    <property type="match status" value="2"/>
</dbReference>
<protein>
    <recommendedName>
        <fullName evidence="1">UPF0502 protein Rmet_3697</fullName>
    </recommendedName>
</protein>
<sequence length="243" mass="26157">MTDTPDTPDTPMATGASSRPPLRALTPLEGRVVAVLLEKQFTVPDTYPLSLNALAAGCNQKTARSPVMSVGEDEILTAIDGLKSLSLVFEGSSSRVPRFEQNLARVLGVPSQSAALLSTLLLRGPQTAAELRLNTARLHAFADISSVEAFLDELAERDPALVVKLPRGPGEREHRWTHLLCGEVSLAEAPGLRTSASIEIAPSELEALRISHRELEDKVARLQALVEEMAEQLGISIDPDRLS</sequence>
<keyword id="KW-0614">Plasmid</keyword>
<keyword id="KW-1185">Reference proteome</keyword>